<name>UCRI_GORGO</name>
<sequence>MLSVAARSGPFAPVLSATSRGVAGALRPLVQATVPATPEQPVLDLKRPFLSRESLSGQAVRRPLVASVGLNVPASVCYSHTDIKVPDFSEYRRLEVLDSTKSSRESSEARKGFSYLVTGVTTVGVAYAAKNAVTQFVSSMSASADVLALAKIEIKLSDIPEGKNMAFKWRGKPLFVRHRTQKEIEQEAAVELSQLRDPQHDLDRVKKPEWVILIGVCTHLGCVPIANAGDFGGYYCPCHGSHYDASGRIRLGPAPLNLEVPTYEFTSDDMVIVG</sequence>
<evidence type="ECO:0000250" key="1">
    <source>
        <dbReference type="UniProtKB" id="P08067"/>
    </source>
</evidence>
<evidence type="ECO:0000250" key="2">
    <source>
        <dbReference type="UniProtKB" id="P13272"/>
    </source>
</evidence>
<evidence type="ECO:0000250" key="3">
    <source>
        <dbReference type="UniProtKB" id="P47985"/>
    </source>
</evidence>
<evidence type="ECO:0000250" key="4">
    <source>
        <dbReference type="UniProtKB" id="Q5ZLR5"/>
    </source>
</evidence>
<evidence type="ECO:0000250" key="5">
    <source>
        <dbReference type="UniProtKB" id="Q9CR68"/>
    </source>
</evidence>
<evidence type="ECO:0000255" key="6">
    <source>
        <dbReference type="PROSITE-ProRule" id="PRU00628"/>
    </source>
</evidence>
<evidence type="ECO:0000305" key="7"/>
<keyword id="KW-0001">2Fe-2S</keyword>
<keyword id="KW-1015">Disulfide bond</keyword>
<keyword id="KW-0249">Electron transport</keyword>
<keyword id="KW-0408">Iron</keyword>
<keyword id="KW-0411">Iron-sulfur</keyword>
<keyword id="KW-0472">Membrane</keyword>
<keyword id="KW-0479">Metal-binding</keyword>
<keyword id="KW-0496">Mitochondrion</keyword>
<keyword id="KW-0999">Mitochondrion inner membrane</keyword>
<keyword id="KW-1185">Reference proteome</keyword>
<keyword id="KW-0679">Respiratory chain</keyword>
<keyword id="KW-0809">Transit peptide</keyword>
<keyword id="KW-1278">Translocase</keyword>
<keyword id="KW-0812">Transmembrane</keyword>
<keyword id="KW-1133">Transmembrane helix</keyword>
<keyword id="KW-0813">Transport</keyword>
<comment type="function">
    <molecule>Cytochrome b-c1 complex subunit Rieske, mitochondrial</molecule>
    <text evidence="1 3">Component of the ubiquinol-cytochrome c oxidoreductase, a multisubunit transmembrane complex that is part of the mitochondrial electron transport chain which drives oxidative phosphorylation. The respiratory chain contains 3 multisubunit complexes succinate dehydrogenase (complex II, CII), ubiquinol-cytochrome c oxidoreductase (cytochrome b-c1 complex, complex III, CIII) and cytochrome c oxidase (complex IV, CIV), that cooperate to transfer electrons derived from NADH and succinate to molecular oxygen, creating an electrochemical gradient over the inner membrane that drives transmembrane transport and the ATP synthase. The cytochrome b-c1 complex catalyzes electron transfer from ubiquinol to cytochrome c, linking this redox reaction to translocation of protons across the mitochondrial inner membrane, with protons being carried across the membrane as hydrogens on the quinol. In the process called Q cycle, 2 protons are consumed from the matrix, 4 protons are released into the intermembrane space and 2 electrons are passed to cytochrome c. The Rieske protein is a catalytic core subunit containing a [2Fe-2S] iron-sulfur cluster. It cycles between 2 conformational states during catalysis to transfer electrons from the quinol bound in the Q(0) site in cytochrome b to cytochrome c1 (By similarity). Incorporation of UQCRFS1 is the penultimate step in complex III assembly (By similarity).</text>
</comment>
<comment type="function">
    <molecule>Cytochrome b-c1 complex subunit 9</molecule>
    <text evidence="2 3 5">Component of the ubiquinol-cytochrome c oxidoreductase (cytochrome b-c1 complex, complex III, CIII). UQCRFS1 undergoes proteolytic processing once it is incorporated in the complex III dimer. One of the fragments, called subunit 9, corresponds to its mitochondrial targeting sequence (MTS) (By similarity). The proteolytic processing is necessary for the correct insertion of UQCRFS1 in the complex III dimer, but the persistence of UQCRFS1-derived fragments may prevent newly imported UQCRFS1 to be processed and assembled into complex III and is detrimental for the complex III structure and function (By similarity).</text>
</comment>
<comment type="catalytic activity">
    <reaction evidence="1">
        <text>a quinol + 2 Fe(III)-[cytochrome c](out) = a quinone + 2 Fe(II)-[cytochrome c](out) + 2 H(+)(out)</text>
        <dbReference type="Rhea" id="RHEA:11484"/>
        <dbReference type="Rhea" id="RHEA-COMP:10350"/>
        <dbReference type="Rhea" id="RHEA-COMP:14399"/>
        <dbReference type="ChEBI" id="CHEBI:15378"/>
        <dbReference type="ChEBI" id="CHEBI:24646"/>
        <dbReference type="ChEBI" id="CHEBI:29033"/>
        <dbReference type="ChEBI" id="CHEBI:29034"/>
        <dbReference type="ChEBI" id="CHEBI:132124"/>
        <dbReference type="EC" id="7.1.1.8"/>
    </reaction>
</comment>
<comment type="cofactor">
    <cofactor evidence="6">
        <name>[2Fe-2S] cluster</name>
        <dbReference type="ChEBI" id="CHEBI:190135"/>
    </cofactor>
    <text evidence="3 6">Binds 1 [2Fe-2S] cluster per subunit. Fe-S cluster delivery to the Rieske protein is mediated by components of the iron sulfur (Fe-S) cluster assembly machinery that reside in the mitochondrial matrix (including HSC20 and LYRM7) (By similarity).</text>
</comment>
<comment type="subunit">
    <molecule>Cytochrome b-c1 complex subunit Rieske, mitochondrial</molecule>
    <text evidence="2 3">Component of the ubiquinol-cytochrome c oxidoreductase (cytochrome b-c1 complex, complex III, CIII), a multisubunit enzyme composed of 11 subunits. The complex is composed of 3 respiratory subunits cytochrome b, cytochrome c1 and Rieske protein UQCRFS1, 2 core protein subunits UQCRC1/QCR1 and UQCRC2/QCR2, and 6 low-molecular weight protein subunits UQCRH/QCR6, UQCRB/QCR7, UQCRQ/QCR8, UQCR10/QCR9, UQCR11/QCR10 and subunit 9, the cleavage product of Rieske protein UQCRFS1. The complex exists as an obligatory dimer and forms supercomplexes (SCs) in the inner mitochondrial membrane with NADH-ubiquinone oxidoreductase (complex I, CI) and cytochrome c oxidase (complex IV, CIV), resulting in different assemblies (supercomplex SCI(1)III(2)IV(1) and megacomplex MCI(2)III(2)IV(2)) (By similarity). Incorporation of the Rieske protein UQCRFS1 is the penultimate step in complex III assembly. Interacts with TTC19, which is involved in the clearance of UQCRFS1 fragments (By similarity).</text>
</comment>
<comment type="subunit">
    <molecule>Cytochrome b-c1 complex subunit 9</molecule>
    <text evidence="2">Component of the ubiquinol-cytochrome c oxidoreductase (cytochrome b-c1 complex, complex III, CIII). Subunit 9 corresponds to the mitochondrial targeting sequence (MTS) of Rieske protein UQCRFS1. It is retained after processing and incorporated inside complex III, where it remains bound to the complex and localizes between the 2 core subunits UQCRC1/QCR1 and UQCRC2/QCR2.</text>
</comment>
<comment type="subcellular location">
    <subcellularLocation>
        <location evidence="4">Mitochondrion inner membrane</location>
        <topology evidence="4">Single-pass membrane protein</topology>
    </subcellularLocation>
</comment>
<comment type="PTM">
    <text evidence="5">Proteolytic processing is necessary for the correct insertion of UQCRFS1 in the complex III dimer. Several fragments are generated during UQCRFS1 insertion, most probably due to the endogenous matrix-processing peptidase (MPP) activity of the 2 core protein subunits UQCRC1/QCR1 and UQCRC2/QCR2, which are homologous to the 2 mitochondrial-processing peptidase (MPP) subunits beta-MPP and alpha-MPP respectively. The action of the protease is also necessary for the clearance of the UQCRFS1 fragments.</text>
</comment>
<comment type="miscellaneous">
    <text>The Rieske protein is a high potential 2Fe-2S protein.</text>
</comment>
<comment type="similarity">
    <text evidence="7">Belongs to the Rieske iron-sulfur protein family.</text>
</comment>
<comment type="caution">
    <text evidence="2 3">Several peptides are generated during UQCRFS1 insertion. According to some authors, the identification of the transit peptide as the subunit 9, does not necessary imply that it must be considered as a structural subunit of the complex III dimer as additional fragments from UQCRFS1 are also present.</text>
</comment>
<gene>
    <name type="primary">UQCRFS1</name>
</gene>
<organism>
    <name type="scientific">Gorilla gorilla gorilla</name>
    <name type="common">Western lowland gorilla</name>
    <dbReference type="NCBI Taxonomy" id="9595"/>
    <lineage>
        <taxon>Eukaryota</taxon>
        <taxon>Metazoa</taxon>
        <taxon>Chordata</taxon>
        <taxon>Craniata</taxon>
        <taxon>Vertebrata</taxon>
        <taxon>Euteleostomi</taxon>
        <taxon>Mammalia</taxon>
        <taxon>Eutheria</taxon>
        <taxon>Euarchontoglires</taxon>
        <taxon>Primates</taxon>
        <taxon>Haplorrhini</taxon>
        <taxon>Catarrhini</taxon>
        <taxon>Hominidae</taxon>
        <taxon>Gorilla</taxon>
    </lineage>
</organism>
<protein>
    <recommendedName>
        <fullName>Cytochrome b-c1 complex subunit Rieske, mitochondrial</fullName>
        <ecNumber>7.1.1.8</ecNumber>
    </recommendedName>
    <alternativeName>
        <fullName>Complex III subunit 5</fullName>
    </alternativeName>
    <alternativeName>
        <fullName>Cytochrome b-c1 complex subunit 5</fullName>
    </alternativeName>
    <alternativeName>
        <fullName>Rieske iron-sulfur protein</fullName>
        <shortName>RISP</shortName>
    </alternativeName>
    <alternativeName>
        <fullName evidence="7">Rieske protein UQCRFS1</fullName>
    </alternativeName>
    <alternativeName>
        <fullName>Ubiquinol-cytochrome c reductase iron-sulfur subunit</fullName>
    </alternativeName>
    <component>
        <recommendedName>
            <fullName evidence="2">Cytochrome b-c1 complex subunit 9</fullName>
            <shortName evidence="2">Su9</shortName>
            <shortName evidence="2">Subunit 9</shortName>
        </recommendedName>
        <alternativeName>
            <fullName evidence="2">8 kDa subunit 9</fullName>
        </alternativeName>
        <alternativeName>
            <fullName>Complex III subunit IX</fullName>
        </alternativeName>
        <alternativeName>
            <fullName>Cytochrome b-c1 complex subunit 11</fullName>
        </alternativeName>
        <alternativeName>
            <fullName>UQCRFS1 mitochondrial targeting sequence</fullName>
            <shortName>UQCRFS1 MTS</shortName>
        </alternativeName>
        <alternativeName>
            <fullName evidence="2">Ubiquinol-cytochrome c reductase 8 kDa protein</fullName>
        </alternativeName>
    </component>
</protein>
<proteinExistence type="inferred from homology"/>
<reference key="1">
    <citation type="submission" date="2003-08" db="EMBL/GenBank/DDBJ databases">
        <title>Molecular evolution of the iron sulfur protein and subunit 9 of complex III of the electron transport chain in primates.</title>
        <authorList>
            <person name="Doan J.W."/>
            <person name="Wildman D.E."/>
            <person name="Schmidt T.R."/>
            <person name="Weiss M.L."/>
            <person name="Goodman M."/>
            <person name="Grossman L.I."/>
        </authorList>
    </citation>
    <scope>NUCLEOTIDE SEQUENCE [GENOMIC DNA]</scope>
</reference>
<feature type="chain" id="PRO_0000307240" description="Cytochrome b-c1 complex subunit 9" evidence="5">
    <location>
        <begin position="1"/>
        <end position="78"/>
    </location>
</feature>
<feature type="chain" id="PRO_0000030663" description="Cytochrome b-c1 complex subunit Rieske, mitochondrial">
    <location>
        <begin position="79"/>
        <end position="274"/>
    </location>
</feature>
<feature type="topological domain" description="Mitochondrial matrix" evidence="2">
    <location>
        <begin position="79"/>
        <end position="103"/>
    </location>
</feature>
<feature type="transmembrane region" description="Helical" evidence="2">
    <location>
        <begin position="104"/>
        <end position="140"/>
    </location>
</feature>
<feature type="topological domain" description="Mitochondrial intermembrane" evidence="2">
    <location>
        <begin position="141"/>
        <end position="274"/>
    </location>
</feature>
<feature type="domain" description="Rieske" evidence="6">
    <location>
        <begin position="187"/>
        <end position="272"/>
    </location>
</feature>
<feature type="binding site" evidence="2">
    <location>
        <position position="217"/>
    </location>
    <ligand>
        <name>[2Fe-2S] cluster</name>
        <dbReference type="ChEBI" id="CHEBI:190135"/>
    </ligand>
</feature>
<feature type="binding site" evidence="2">
    <location>
        <position position="219"/>
    </location>
    <ligand>
        <name>[2Fe-2S] cluster</name>
        <dbReference type="ChEBI" id="CHEBI:190135"/>
    </ligand>
</feature>
<feature type="binding site" evidence="2">
    <location>
        <position position="236"/>
    </location>
    <ligand>
        <name>[2Fe-2S] cluster</name>
        <dbReference type="ChEBI" id="CHEBI:190135"/>
    </ligand>
</feature>
<feature type="binding site" evidence="2">
    <location>
        <position position="239"/>
    </location>
    <ligand>
        <name>[2Fe-2S] cluster</name>
        <dbReference type="ChEBI" id="CHEBI:190135"/>
    </ligand>
</feature>
<feature type="binding site" evidence="2">
    <location>
        <position position="241"/>
    </location>
    <ligand>
        <name>[2Fe-2S] cluster</name>
        <dbReference type="ChEBI" id="CHEBI:190135"/>
    </ligand>
</feature>
<feature type="disulfide bond" evidence="2">
    <location>
        <begin position="222"/>
        <end position="238"/>
    </location>
</feature>
<accession>Q69BK4</accession>
<dbReference type="EC" id="7.1.1.8"/>
<dbReference type="EMBL" id="AY387500">
    <property type="protein sequence ID" value="AAR32728.1"/>
    <property type="molecule type" value="Genomic_DNA"/>
</dbReference>
<dbReference type="EMBL" id="AY387499">
    <property type="protein sequence ID" value="AAR32728.1"/>
    <property type="status" value="JOINED"/>
    <property type="molecule type" value="Genomic_DNA"/>
</dbReference>
<dbReference type="SMR" id="Q69BK4"/>
<dbReference type="FunCoup" id="Q69BK4">
    <property type="interactions" value="1204"/>
</dbReference>
<dbReference type="STRING" id="9593.ENSGGOP00000019985"/>
<dbReference type="Ensembl" id="ENSGGOT00000025231.2">
    <property type="protein sequence ID" value="ENSGGOP00000019985.2"/>
    <property type="gene ID" value="ENSGGOG00000012978.3"/>
</dbReference>
<dbReference type="GeneID" id="101131106"/>
<dbReference type="KEGG" id="ggo:101131106"/>
<dbReference type="eggNOG" id="KOG1671">
    <property type="taxonomic scope" value="Eukaryota"/>
</dbReference>
<dbReference type="GeneTree" id="ENSGT00390000001014"/>
<dbReference type="InParanoid" id="Q69BK4"/>
<dbReference type="OMA" id="PPYDFND"/>
<dbReference type="OrthoDB" id="5587at9604"/>
<dbReference type="Proteomes" id="UP000001519">
    <property type="component" value="Chromosome 19"/>
</dbReference>
<dbReference type="Bgee" id="ENSGGOG00000012978">
    <property type="expression patterns" value="Expressed in heart and 6 other cell types or tissues"/>
</dbReference>
<dbReference type="GO" id="GO:0005743">
    <property type="term" value="C:mitochondrial inner membrane"/>
    <property type="evidence" value="ECO:0007669"/>
    <property type="project" value="UniProtKB-SubCell"/>
</dbReference>
<dbReference type="GO" id="GO:0045275">
    <property type="term" value="C:respiratory chain complex III"/>
    <property type="evidence" value="ECO:0000318"/>
    <property type="project" value="GO_Central"/>
</dbReference>
<dbReference type="GO" id="GO:0051537">
    <property type="term" value="F:2 iron, 2 sulfur cluster binding"/>
    <property type="evidence" value="ECO:0007669"/>
    <property type="project" value="UniProtKB-KW"/>
</dbReference>
<dbReference type="GO" id="GO:0046872">
    <property type="term" value="F:metal ion binding"/>
    <property type="evidence" value="ECO:0007669"/>
    <property type="project" value="UniProtKB-KW"/>
</dbReference>
<dbReference type="GO" id="GO:0016491">
    <property type="term" value="F:oxidoreductase activity"/>
    <property type="evidence" value="ECO:0000318"/>
    <property type="project" value="GO_Central"/>
</dbReference>
<dbReference type="GO" id="GO:0008121">
    <property type="term" value="F:ubiquinol-cytochrome-c reductase activity"/>
    <property type="evidence" value="ECO:0007669"/>
    <property type="project" value="UniProtKB-EC"/>
</dbReference>
<dbReference type="GO" id="GO:0006122">
    <property type="term" value="P:mitochondrial electron transport, ubiquinol to cytochrome c"/>
    <property type="evidence" value="ECO:0000318"/>
    <property type="project" value="GO_Central"/>
</dbReference>
<dbReference type="GO" id="GO:0034551">
    <property type="term" value="P:mitochondrial respiratory chain complex III assembly"/>
    <property type="evidence" value="ECO:0007669"/>
    <property type="project" value="Ensembl"/>
</dbReference>
<dbReference type="CDD" id="cd03470">
    <property type="entry name" value="Rieske_cytochrome_bc1"/>
    <property type="match status" value="1"/>
</dbReference>
<dbReference type="FunFam" id="1.20.5.270:FF:000001">
    <property type="entry name" value="Cytochrome b-c1 complex subunit Rieske, mitochondrial"/>
    <property type="match status" value="1"/>
</dbReference>
<dbReference type="FunFam" id="2.10.210.10:FF:000001">
    <property type="entry name" value="Cytochrome b-c1 complex subunit Rieske, mitochondrial"/>
    <property type="match status" value="1"/>
</dbReference>
<dbReference type="FunFam" id="2.102.10.10:FF:000001">
    <property type="entry name" value="Cytochrome b-c1 complex subunit Rieske, mitochondrial"/>
    <property type="match status" value="1"/>
</dbReference>
<dbReference type="Gene3D" id="2.10.210.10">
    <property type="entry name" value="Cytochrome Bc1 Complex, Chain I"/>
    <property type="match status" value="1"/>
</dbReference>
<dbReference type="Gene3D" id="2.102.10.10">
    <property type="entry name" value="Rieske [2Fe-2S] iron-sulphur domain"/>
    <property type="match status" value="1"/>
</dbReference>
<dbReference type="Gene3D" id="1.20.5.270">
    <property type="entry name" value="Ubiquinol cytochrome reductase, transmembrane domain"/>
    <property type="match status" value="1"/>
</dbReference>
<dbReference type="InterPro" id="IPR037008">
    <property type="entry name" value="bc1_Rieske_TM_sf"/>
</dbReference>
<dbReference type="InterPro" id="IPR011070">
    <property type="entry name" value="Globular_prot_asu/bsu"/>
</dbReference>
<dbReference type="InterPro" id="IPR017941">
    <property type="entry name" value="Rieske_2Fe-2S"/>
</dbReference>
<dbReference type="InterPro" id="IPR036922">
    <property type="entry name" value="Rieske_2Fe-2S_sf"/>
</dbReference>
<dbReference type="InterPro" id="IPR014349">
    <property type="entry name" value="Rieske_Fe-S_prot"/>
</dbReference>
<dbReference type="InterPro" id="IPR005805">
    <property type="entry name" value="Rieske_Fe-S_prot_C"/>
</dbReference>
<dbReference type="InterPro" id="IPR004192">
    <property type="entry name" value="Rieske_TM"/>
</dbReference>
<dbReference type="InterPro" id="IPR006317">
    <property type="entry name" value="Ubiquinol_cyt_c_Rdtase_Fe-S-su"/>
</dbReference>
<dbReference type="InterPro" id="IPR015248">
    <property type="entry name" value="UQCRFS1_N"/>
</dbReference>
<dbReference type="NCBIfam" id="TIGR01416">
    <property type="entry name" value="Rieske_proteo"/>
    <property type="match status" value="1"/>
</dbReference>
<dbReference type="PANTHER" id="PTHR10134">
    <property type="entry name" value="CYTOCHROME B-C1 COMPLEX SUBUNIT RIESKE, MITOCHONDRIAL"/>
    <property type="match status" value="1"/>
</dbReference>
<dbReference type="Pfam" id="PF00355">
    <property type="entry name" value="Rieske"/>
    <property type="match status" value="1"/>
</dbReference>
<dbReference type="Pfam" id="PF09165">
    <property type="entry name" value="Ubiq-Cytc-red_N"/>
    <property type="match status" value="1"/>
</dbReference>
<dbReference type="Pfam" id="PF02921">
    <property type="entry name" value="UCR_TM"/>
    <property type="match status" value="1"/>
</dbReference>
<dbReference type="PRINTS" id="PR00162">
    <property type="entry name" value="RIESKE"/>
</dbReference>
<dbReference type="SUPFAM" id="SSF50022">
    <property type="entry name" value="ISP domain"/>
    <property type="match status" value="1"/>
</dbReference>
<dbReference type="SUPFAM" id="SSF81502">
    <property type="entry name" value="ISP transmembrane anchor"/>
    <property type="match status" value="1"/>
</dbReference>
<dbReference type="SUPFAM" id="SSF56568">
    <property type="entry name" value="Non-globular alpha+beta subunits of globular proteins"/>
    <property type="match status" value="1"/>
</dbReference>
<dbReference type="PROSITE" id="PS51296">
    <property type="entry name" value="RIESKE"/>
    <property type="match status" value="1"/>
</dbReference>